<feature type="chain" id="PRO_0000271725" description="Formate acetyltransferase">
    <location>
        <begin position="1"/>
        <end position="749"/>
    </location>
</feature>
<feature type="domain" description="PFL" evidence="4">
    <location>
        <begin position="3"/>
        <end position="619"/>
    </location>
</feature>
<feature type="domain" description="Glycine radical" evidence="3">
    <location>
        <begin position="626"/>
        <end position="749"/>
    </location>
</feature>
<feature type="active site" description="S-acetylcysteine intermediate" evidence="1">
    <location>
        <position position="413"/>
    </location>
</feature>
<feature type="active site" description="Cysteine radical intermediate" evidence="1">
    <location>
        <position position="414"/>
    </location>
</feature>
<feature type="modified residue" description="Glycine radical" evidence="3">
    <location>
        <position position="724"/>
    </location>
</feature>
<keyword id="KW-0012">Acyltransferase</keyword>
<keyword id="KW-0119">Carbohydrate metabolism</keyword>
<keyword id="KW-0963">Cytoplasm</keyword>
<keyword id="KW-0313">Glucose metabolism</keyword>
<keyword id="KW-0556">Organic radical</keyword>
<keyword id="KW-0808">Transferase</keyword>
<name>PFLB_STAAR</name>
<evidence type="ECO:0000250" key="1">
    <source>
        <dbReference type="UniProtKB" id="P09373"/>
    </source>
</evidence>
<evidence type="ECO:0000250" key="2">
    <source>
        <dbReference type="UniProtKB" id="Q5HJF4"/>
    </source>
</evidence>
<evidence type="ECO:0000255" key="3">
    <source>
        <dbReference type="PROSITE-ProRule" id="PRU00493"/>
    </source>
</evidence>
<evidence type="ECO:0000255" key="4">
    <source>
        <dbReference type="PROSITE-ProRule" id="PRU00887"/>
    </source>
</evidence>
<evidence type="ECO:0000305" key="5"/>
<protein>
    <recommendedName>
        <fullName>Formate acetyltransferase</fullName>
        <ecNumber evidence="1">2.3.1.54</ecNumber>
    </recommendedName>
    <alternativeName>
        <fullName>Pyruvate formate-lyase</fullName>
    </alternativeName>
</protein>
<organism>
    <name type="scientific">Staphylococcus aureus (strain MRSA252)</name>
    <dbReference type="NCBI Taxonomy" id="282458"/>
    <lineage>
        <taxon>Bacteria</taxon>
        <taxon>Bacillati</taxon>
        <taxon>Bacillota</taxon>
        <taxon>Bacilli</taxon>
        <taxon>Bacillales</taxon>
        <taxon>Staphylococcaceae</taxon>
        <taxon>Staphylococcus</taxon>
    </lineage>
</organism>
<accession>Q6GK90</accession>
<dbReference type="EC" id="2.3.1.54" evidence="1"/>
<dbReference type="EMBL" id="BX571856">
    <property type="protein sequence ID" value="CAG39244.1"/>
    <property type="molecule type" value="Genomic_DNA"/>
</dbReference>
<dbReference type="RefSeq" id="WP_000894660.1">
    <property type="nucleotide sequence ID" value="NC_002952.2"/>
</dbReference>
<dbReference type="SMR" id="Q6GK90"/>
<dbReference type="KEGG" id="sar:SAR0217"/>
<dbReference type="HOGENOM" id="CLU_023898_0_0_9"/>
<dbReference type="UniPathway" id="UPA00920">
    <property type="reaction ID" value="UER00891"/>
</dbReference>
<dbReference type="Proteomes" id="UP000000596">
    <property type="component" value="Chromosome"/>
</dbReference>
<dbReference type="GO" id="GO:0005829">
    <property type="term" value="C:cytosol"/>
    <property type="evidence" value="ECO:0007669"/>
    <property type="project" value="TreeGrafter"/>
</dbReference>
<dbReference type="GO" id="GO:0008861">
    <property type="term" value="F:formate C-acetyltransferase activity"/>
    <property type="evidence" value="ECO:0007669"/>
    <property type="project" value="UniProtKB-EC"/>
</dbReference>
<dbReference type="GO" id="GO:0006006">
    <property type="term" value="P:glucose metabolic process"/>
    <property type="evidence" value="ECO:0007669"/>
    <property type="project" value="UniProtKB-KW"/>
</dbReference>
<dbReference type="CDD" id="cd01678">
    <property type="entry name" value="PFL1"/>
    <property type="match status" value="1"/>
</dbReference>
<dbReference type="FunFam" id="3.20.70.20:FF:000003">
    <property type="entry name" value="Formate acetyltransferase"/>
    <property type="match status" value="1"/>
</dbReference>
<dbReference type="Gene3D" id="3.20.70.20">
    <property type="match status" value="1"/>
</dbReference>
<dbReference type="InterPro" id="IPR050244">
    <property type="entry name" value="Auton_GlycylRad_Cofactor"/>
</dbReference>
<dbReference type="InterPro" id="IPR005949">
    <property type="entry name" value="Form_AcTrfase"/>
</dbReference>
<dbReference type="InterPro" id="IPR019777">
    <property type="entry name" value="Form_AcTrfase_GR_CS"/>
</dbReference>
<dbReference type="InterPro" id="IPR001150">
    <property type="entry name" value="Gly_radical"/>
</dbReference>
<dbReference type="InterPro" id="IPR004184">
    <property type="entry name" value="PFL_dom"/>
</dbReference>
<dbReference type="NCBIfam" id="TIGR01255">
    <property type="entry name" value="pyr_form_ly_1"/>
    <property type="match status" value="1"/>
</dbReference>
<dbReference type="PANTHER" id="PTHR30191">
    <property type="entry name" value="FORMATE ACETYLTRANSFERASE"/>
    <property type="match status" value="1"/>
</dbReference>
<dbReference type="PANTHER" id="PTHR30191:SF0">
    <property type="entry name" value="FORMATE ACETYLTRANSFERASE 1"/>
    <property type="match status" value="1"/>
</dbReference>
<dbReference type="Pfam" id="PF01228">
    <property type="entry name" value="Gly_radical"/>
    <property type="match status" value="1"/>
</dbReference>
<dbReference type="Pfam" id="PF02901">
    <property type="entry name" value="PFL-like"/>
    <property type="match status" value="1"/>
</dbReference>
<dbReference type="PIRSF" id="PIRSF000379">
    <property type="entry name" value="For_Ac_trans_1"/>
    <property type="match status" value="1"/>
</dbReference>
<dbReference type="SUPFAM" id="SSF51998">
    <property type="entry name" value="PFL-like glycyl radical enzymes"/>
    <property type="match status" value="1"/>
</dbReference>
<dbReference type="PROSITE" id="PS00850">
    <property type="entry name" value="GLY_RADICAL_1"/>
    <property type="match status" value="1"/>
</dbReference>
<dbReference type="PROSITE" id="PS51149">
    <property type="entry name" value="GLY_RADICAL_2"/>
    <property type="match status" value="1"/>
</dbReference>
<dbReference type="PROSITE" id="PS51554">
    <property type="entry name" value="PFL"/>
    <property type="match status" value="1"/>
</dbReference>
<proteinExistence type="inferred from homology"/>
<reference key="1">
    <citation type="journal article" date="2004" name="Proc. Natl. Acad. Sci. U.S.A.">
        <title>Complete genomes of two clinical Staphylococcus aureus strains: evidence for the rapid evolution of virulence and drug resistance.</title>
        <authorList>
            <person name="Holden M.T.G."/>
            <person name="Feil E.J."/>
            <person name="Lindsay J.A."/>
            <person name="Peacock S.J."/>
            <person name="Day N.P.J."/>
            <person name="Enright M.C."/>
            <person name="Foster T.J."/>
            <person name="Moore C.E."/>
            <person name="Hurst L."/>
            <person name="Atkin R."/>
            <person name="Barron A."/>
            <person name="Bason N."/>
            <person name="Bentley S.D."/>
            <person name="Chillingworth C."/>
            <person name="Chillingworth T."/>
            <person name="Churcher C."/>
            <person name="Clark L."/>
            <person name="Corton C."/>
            <person name="Cronin A."/>
            <person name="Doggett J."/>
            <person name="Dowd L."/>
            <person name="Feltwell T."/>
            <person name="Hance Z."/>
            <person name="Harris B."/>
            <person name="Hauser H."/>
            <person name="Holroyd S."/>
            <person name="Jagels K."/>
            <person name="James K.D."/>
            <person name="Lennard N."/>
            <person name="Line A."/>
            <person name="Mayes R."/>
            <person name="Moule S."/>
            <person name="Mungall K."/>
            <person name="Ormond D."/>
            <person name="Quail M.A."/>
            <person name="Rabbinowitsch E."/>
            <person name="Rutherford K.M."/>
            <person name="Sanders M."/>
            <person name="Sharp S."/>
            <person name="Simmonds M."/>
            <person name="Stevens K."/>
            <person name="Whitehead S."/>
            <person name="Barrell B.G."/>
            <person name="Spratt B.G."/>
            <person name="Parkhill J."/>
        </authorList>
    </citation>
    <scope>NUCLEOTIDE SEQUENCE [LARGE SCALE GENOMIC DNA]</scope>
    <source>
        <strain>MRSA252</strain>
    </source>
</reference>
<sequence length="749" mass="84862">MLETNKNHATAWQGFKNGRWNRHVDVREFIQLNYTLYEGNDSFLAGPTEATSKLWEQVMQLSKEERERGGMWDMDTKVASTITSHDAGYLDKDLETIVGVQTEKPFKRSMQPFGGIRMAKAACEAYGYELDEETEKIFTDYRKTHNQGVFDAYSREMLNCRKAGVITGLPDAYGRGRIIGDYRRVALYGVDFLMEEKMHDFNTMSTEMSEDVIRLREELSEQYRALKELKELGQKYGFDLSRPAENFKEAVQWLYLAYLAAIKEQNGAAMSLGRTSTFLDIYAERDLKAGVITESEVQEIIDHFIMKLRIVKFARTPDYNELFSGDPTWVTESIGGVGIDGRPLVTKNSFRFLHSLDNLGPAPEPNLTVLWSVRLPDNFKTYCAKMSIKTSSIQYENDDIMRESYGDDYGIACCVSAMTIGKQMQFFGARANLAKTLLYAINGGKDEKSGAQVGPNFEGINSEVLEYDEVFKKFDQMMDWLAGVYINSLNVIHYMHDKYSYERIEMALHDTEIVRTMATGIAGLSVAADSLSAIKYAQVKPIRNEEGLVVDFEIEGDFPKYGNNDDRVDDIAVDLVERFMTKLRSHKTYRDSEHTMSVLTITSNVVYGKKTGNTPDGRKAGEPFAPGANPMHGRDQKGALSSLSSVAKIPYDCCKDGISNTFSIVPKSLGKEPEDQNRNLTSMLDGYAMQCGHHLNINVFNRETLIDAMEHPEEYPQLTIRVSGYAVNFIKLTREQQLDVISRTFHESM</sequence>
<comment type="function">
    <text evidence="1">Catalyzes the conversion of pyruvate to formate and acetyl-CoA.</text>
</comment>
<comment type="catalytic activity">
    <reaction evidence="1">
        <text>formate + acetyl-CoA = pyruvate + CoA</text>
        <dbReference type="Rhea" id="RHEA:11844"/>
        <dbReference type="ChEBI" id="CHEBI:15361"/>
        <dbReference type="ChEBI" id="CHEBI:15740"/>
        <dbReference type="ChEBI" id="CHEBI:57287"/>
        <dbReference type="ChEBI" id="CHEBI:57288"/>
        <dbReference type="EC" id="2.3.1.54"/>
    </reaction>
</comment>
<comment type="pathway">
    <text>Fermentation; pyruvate fermentation; formate from pyruvate: step 1/1.</text>
</comment>
<comment type="subunit">
    <text evidence="1">Homodimer.</text>
</comment>
<comment type="subcellular location">
    <subcellularLocation>
        <location evidence="2">Cytoplasm</location>
    </subcellularLocation>
</comment>
<comment type="miscellaneous">
    <text evidence="1">Several mechanisms have been proposed based on complexes formed with substrate analogs. After activation by the glycine radical, the cysteine radical, Cys-414, can abstract hydrogen atoms from the other active site cysteine, Cys-413, and from coenzyme A, and it can also transfer hydrogen atoms to product radicals. The other active site cysteine can attack the central carbonyl of pyruvate and covalently bind the product acetyl group.</text>
</comment>
<comment type="similarity">
    <text evidence="5">Belongs to the glycyl radical enzyme (GRE) family. PFL subfamily.</text>
</comment>
<gene>
    <name type="primary">pflB</name>
    <name type="ordered locus">SAR0217</name>
</gene>